<gene>
    <name type="primary">copb-2</name>
    <name type="ORF">F38E11.5</name>
</gene>
<dbReference type="EMBL" id="Z68342">
    <property type="protein sequence ID" value="CAA92776.1"/>
    <property type="molecule type" value="Genomic_DNA"/>
</dbReference>
<dbReference type="PIR" id="T21970">
    <property type="entry name" value="T21970"/>
</dbReference>
<dbReference type="RefSeq" id="NP_501671.1">
    <property type="nucleotide sequence ID" value="NM_069270.7"/>
</dbReference>
<dbReference type="SMR" id="Q20168"/>
<dbReference type="BioGRID" id="42885">
    <property type="interactions" value="27"/>
</dbReference>
<dbReference type="FunCoup" id="Q20168">
    <property type="interactions" value="2848"/>
</dbReference>
<dbReference type="IntAct" id="Q20168">
    <property type="interactions" value="6"/>
</dbReference>
<dbReference type="STRING" id="6239.F38E11.5.1"/>
<dbReference type="iPTMnet" id="Q20168"/>
<dbReference type="PaxDb" id="6239-F38E11.5"/>
<dbReference type="PeptideAtlas" id="Q20168"/>
<dbReference type="EnsemblMetazoa" id="F38E11.5.1">
    <property type="protein sequence ID" value="F38E11.5.1"/>
    <property type="gene ID" value="WBGene00009542"/>
</dbReference>
<dbReference type="GeneID" id="177779"/>
<dbReference type="KEGG" id="cel:CELE_F38E11.5"/>
<dbReference type="UCSC" id="F38E11.5">
    <property type="organism name" value="c. elegans"/>
</dbReference>
<dbReference type="AGR" id="WB:WBGene00009542"/>
<dbReference type="CTD" id="177779"/>
<dbReference type="WormBase" id="F38E11.5">
    <property type="protein sequence ID" value="CE18673"/>
    <property type="gene ID" value="WBGene00009542"/>
    <property type="gene designation" value="copb-2"/>
</dbReference>
<dbReference type="eggNOG" id="KOG0276">
    <property type="taxonomic scope" value="Eukaryota"/>
</dbReference>
<dbReference type="GeneTree" id="ENSGT00900000141083"/>
<dbReference type="HOGENOM" id="CLU_005507_0_0_1"/>
<dbReference type="InParanoid" id="Q20168"/>
<dbReference type="OMA" id="KSYGQCV"/>
<dbReference type="OrthoDB" id="2150324at2759"/>
<dbReference type="PhylomeDB" id="Q20168"/>
<dbReference type="Reactome" id="R-CEL-6807878">
    <property type="pathway name" value="COPI-mediated anterograde transport"/>
</dbReference>
<dbReference type="Reactome" id="R-CEL-6811434">
    <property type="pathway name" value="COPI-dependent Golgi-to-ER retrograde traffic"/>
</dbReference>
<dbReference type="PRO" id="PR:Q20168"/>
<dbReference type="Proteomes" id="UP000001940">
    <property type="component" value="Chromosome IV"/>
</dbReference>
<dbReference type="Bgee" id="WBGene00009542">
    <property type="expression patterns" value="Expressed in germ line (C elegans) and 4 other cell types or tissues"/>
</dbReference>
<dbReference type="GO" id="GO:0030126">
    <property type="term" value="C:COPI vesicle coat"/>
    <property type="evidence" value="ECO:0000318"/>
    <property type="project" value="GO_Central"/>
</dbReference>
<dbReference type="GO" id="GO:0000139">
    <property type="term" value="C:Golgi membrane"/>
    <property type="evidence" value="ECO:0007669"/>
    <property type="project" value="UniProtKB-SubCell"/>
</dbReference>
<dbReference type="GO" id="GO:0005198">
    <property type="term" value="F:structural molecule activity"/>
    <property type="evidence" value="ECO:0007669"/>
    <property type="project" value="InterPro"/>
</dbReference>
<dbReference type="GO" id="GO:0009792">
    <property type="term" value="P:embryo development ending in birth or egg hatching"/>
    <property type="evidence" value="ECO:0000315"/>
    <property type="project" value="WormBase"/>
</dbReference>
<dbReference type="GO" id="GO:0006888">
    <property type="term" value="P:endoplasmic reticulum to Golgi vesicle-mediated transport"/>
    <property type="evidence" value="ECO:0000318"/>
    <property type="project" value="GO_Central"/>
</dbReference>
<dbReference type="GO" id="GO:0006891">
    <property type="term" value="P:intra-Golgi vesicle-mediated transport"/>
    <property type="evidence" value="ECO:0000318"/>
    <property type="project" value="GO_Central"/>
</dbReference>
<dbReference type="GO" id="GO:0006886">
    <property type="term" value="P:intracellular protein transport"/>
    <property type="evidence" value="ECO:0000315"/>
    <property type="project" value="WormBase"/>
</dbReference>
<dbReference type="GO" id="GO:0048599">
    <property type="term" value="P:oocyte development"/>
    <property type="evidence" value="ECO:0000315"/>
    <property type="project" value="WormBase"/>
</dbReference>
<dbReference type="GO" id="GO:0006890">
    <property type="term" value="P:retrograde vesicle-mediated transport, Golgi to endoplasmic reticulum"/>
    <property type="evidence" value="ECO:0000318"/>
    <property type="project" value="GO_Central"/>
</dbReference>
<dbReference type="CDD" id="cd22947">
    <property type="entry name" value="Coatomer_WDAD_beta-like"/>
    <property type="match status" value="1"/>
</dbReference>
<dbReference type="CDD" id="cd00200">
    <property type="entry name" value="WD40"/>
    <property type="match status" value="1"/>
</dbReference>
<dbReference type="FunFam" id="1.25.40.470:FF:000001">
    <property type="entry name" value="Coatomer subunit beta"/>
    <property type="match status" value="1"/>
</dbReference>
<dbReference type="FunFam" id="2.130.10.10:FF:000008">
    <property type="entry name" value="Coatomer subunit beta"/>
    <property type="match status" value="1"/>
</dbReference>
<dbReference type="Gene3D" id="1.25.40.470">
    <property type="match status" value="1"/>
</dbReference>
<dbReference type="Gene3D" id="2.130.10.10">
    <property type="entry name" value="YVTN repeat-like/Quinoprotein amine dehydrogenase"/>
    <property type="match status" value="1"/>
</dbReference>
<dbReference type="InterPro" id="IPR006692">
    <property type="entry name" value="Beta-prop_COPA/B_2nd"/>
</dbReference>
<dbReference type="InterPro" id="IPR050844">
    <property type="entry name" value="Coatomer_complex_subunit"/>
</dbReference>
<dbReference type="InterPro" id="IPR016453">
    <property type="entry name" value="COPB2"/>
</dbReference>
<dbReference type="InterPro" id="IPR020472">
    <property type="entry name" value="G-protein_beta_WD-40_rep"/>
</dbReference>
<dbReference type="InterPro" id="IPR056176">
    <property type="entry name" value="TPR_COPA_B"/>
</dbReference>
<dbReference type="InterPro" id="IPR015943">
    <property type="entry name" value="WD40/YVTN_repeat-like_dom_sf"/>
</dbReference>
<dbReference type="InterPro" id="IPR036322">
    <property type="entry name" value="WD40_repeat_dom_sf"/>
</dbReference>
<dbReference type="InterPro" id="IPR001680">
    <property type="entry name" value="WD40_rpt"/>
</dbReference>
<dbReference type="PANTHER" id="PTHR19876">
    <property type="entry name" value="COATOMER"/>
    <property type="match status" value="1"/>
</dbReference>
<dbReference type="PANTHER" id="PTHR19876:SF2">
    <property type="entry name" value="COATOMER SUBUNIT BETA"/>
    <property type="match status" value="1"/>
</dbReference>
<dbReference type="Pfam" id="PF04053">
    <property type="entry name" value="B-prop_COPA_B_2nd"/>
    <property type="match status" value="1"/>
</dbReference>
<dbReference type="Pfam" id="PF23953">
    <property type="entry name" value="TPR_COPA_B"/>
    <property type="match status" value="1"/>
</dbReference>
<dbReference type="Pfam" id="PF00400">
    <property type="entry name" value="WD40"/>
    <property type="match status" value="6"/>
</dbReference>
<dbReference type="PIRSF" id="PIRSF005567">
    <property type="entry name" value="Coatomer_beta'_subunit"/>
    <property type="match status" value="1"/>
</dbReference>
<dbReference type="PRINTS" id="PR00320">
    <property type="entry name" value="GPROTEINBRPT"/>
</dbReference>
<dbReference type="SMART" id="SM00320">
    <property type="entry name" value="WD40"/>
    <property type="match status" value="7"/>
</dbReference>
<dbReference type="SUPFAM" id="SSF50978">
    <property type="entry name" value="WD40 repeat-like"/>
    <property type="match status" value="2"/>
</dbReference>
<dbReference type="PROSITE" id="PS50082">
    <property type="entry name" value="WD_REPEATS_2"/>
    <property type="match status" value="5"/>
</dbReference>
<dbReference type="PROSITE" id="PS50294">
    <property type="entry name" value="WD_REPEATS_REGION"/>
    <property type="match status" value="1"/>
</dbReference>
<sequence length="1000" mass="111107">MPLRLDVKRKLLARSDRVKCVDLHPVETWLLAALYNGNVHIWNYETQTLVKSFEVCDVPVRAAKFVPRKSWVVTGSDDMHIRVFNYNTLERVHQFEAHSDYLRSLVVHPTLPYVISSSDDMLVKMWDWDNKWAMKQSFEGHTHYVMQIAINPKDNNTFATASLDKTVKVWQFGSNVPNFTLEGHEKGVNCVDYYHGGEKPYIISGADDHLVKIWDYQNKTCVQTLDGHAQNVSSVCFHPELPLIITGSEDSTVRLWHANTYRLETTLNYGLERVWCIQAQKGANTIAIGYDEGSVTLKLGREEPAVSMDSSGKILWAKHSEIQQANLKTISTEESEAIQDGERLPLSVKDLGSSEIYPQTLAHSSNGRFVVACGDGEYIVYTAMALRNKDFGQGLEFVWAVDPNMFAVRESATNVKIKKNFKDHKSIRSDMVLEGISGGPLLALRSNNSLCFFDWESAVLVRRIEITSKSIYWSDNGEMVAICGDDSFYVLKYSAEAVANATEVTEDGIEDAFEVIGEQAEAVKTGFWIGDCFIFTTALNRINYYVGGEIVTIAHVDRPLYLLGYMAKESRVYAVDKDLNVISYKLLLSVLEYQTAVMRRDFDTADKVLTTIPKEQRTRVAHFLEKQGFKKQALAVSQDPDHKFDLSVALGDLKTAYDLALQSDSEEKWKALSNAATLKSELLLAGECLGRARDFGGLMLLATCAGSAPLLQKLADDSAAAESHNISFLSSLLLGDIDACLDKLISTGRLPEAAFLARTHAPSRVSSILELWKAKASGHSEKSSRKIGESLADPVKYENLFPGFTQSLKAESFVREISKIPVPASVRVPSAATRNIQEELDEAVASGAVSFTDDGQAVLKNAPRQTETQLKAPPPPSVARQPSPVRQPSPIREPSPIREPEPEEEEEQEEFDDDQQEVHVPANQESADAHGTSKTPDVVLETSRPDIVPPRGSAAPDLVSASSQQSAQDFQDDTQWSDEDFGDAENGDLNMDDLNLDEED</sequence>
<protein>
    <recommendedName>
        <fullName>Probable coatomer subunit beta'</fullName>
    </recommendedName>
    <alternativeName>
        <fullName>Beta'-coat protein</fullName>
        <shortName>Beta'-COP</shortName>
    </alternativeName>
</protein>
<feature type="chain" id="PRO_0000050915" description="Probable coatomer subunit beta'">
    <location>
        <begin position="1"/>
        <end position="1000"/>
    </location>
</feature>
<feature type="repeat" description="WD 1">
    <location>
        <begin position="13"/>
        <end position="52"/>
    </location>
</feature>
<feature type="repeat" description="WD 2">
    <location>
        <begin position="55"/>
        <end position="94"/>
    </location>
</feature>
<feature type="repeat" description="WD 3">
    <location>
        <begin position="97"/>
        <end position="136"/>
    </location>
</feature>
<feature type="repeat" description="WD 4">
    <location>
        <begin position="140"/>
        <end position="180"/>
    </location>
</feature>
<feature type="repeat" description="WD 5">
    <location>
        <begin position="183"/>
        <end position="224"/>
    </location>
</feature>
<feature type="repeat" description="WD 6">
    <location>
        <begin position="227"/>
        <end position="266"/>
    </location>
</feature>
<feature type="repeat" description="WD 7">
    <location>
        <begin position="351"/>
        <end position="391"/>
    </location>
</feature>
<feature type="region of interest" description="Disordered" evidence="2">
    <location>
        <begin position="863"/>
        <end position="1000"/>
    </location>
</feature>
<feature type="compositionally biased region" description="Acidic residues" evidence="2">
    <location>
        <begin position="901"/>
        <end position="915"/>
    </location>
</feature>
<feature type="compositionally biased region" description="Low complexity" evidence="2">
    <location>
        <begin position="960"/>
        <end position="969"/>
    </location>
</feature>
<feature type="compositionally biased region" description="Acidic residues" evidence="2">
    <location>
        <begin position="970"/>
        <end position="1000"/>
    </location>
</feature>
<evidence type="ECO:0000250" key="1"/>
<evidence type="ECO:0000256" key="2">
    <source>
        <dbReference type="SAM" id="MobiDB-lite"/>
    </source>
</evidence>
<evidence type="ECO:0000269" key="3">
    <source>
    </source>
</evidence>
<evidence type="ECO:0000305" key="4"/>
<comment type="function">
    <text evidence="1">The coatomer is a cytosolic protein complex that binds to dilysine motifs and reversibly associates with Golgi non-clathrin-coated vesicles, which further mediate biosynthetic protein transport from the ER, via the Golgi up to the trans Golgi network. Coatomer complex is required for budding from Golgi membranes, and is essential for the retrograde Golgi-to-ER transport of dilysine-tagged proteins (By similarity).</text>
</comment>
<comment type="subunit">
    <text evidence="1">Oligomeric complex that consists of at least the alpha, beta, beta', gamma, delta, epsilon and zeta subunits.</text>
</comment>
<comment type="subcellular location">
    <subcellularLocation>
        <location evidence="1">Cytoplasm</location>
    </subcellularLocation>
    <subcellularLocation>
        <location evidence="1">Golgi apparatus membrane</location>
        <topology evidence="1">Peripheral membrane protein</topology>
        <orientation evidence="1">Cytoplasmic side</orientation>
    </subcellularLocation>
    <subcellularLocation>
        <location evidence="1">Cytoplasmic vesicle</location>
        <location evidence="1">COPI-coated vesicle membrane</location>
        <topology evidence="1">Peripheral membrane protein</topology>
        <orientation evidence="1">Cytoplasmic side</orientation>
    </subcellularLocation>
    <text evidence="1">The coatomer is cytoplasmic or polymerized on the cytoplasmic side of the Golgi, as well as on the vesicles/buds originating from it.</text>
</comment>
<comment type="disruption phenotype">
    <text evidence="3">Embryonic death and abnormal oocytes.</text>
</comment>
<comment type="similarity">
    <text evidence="4">Belongs to the WD repeat COPB2 family.</text>
</comment>
<accession>Q20168</accession>
<proteinExistence type="inferred from homology"/>
<keyword id="KW-0963">Cytoplasm</keyword>
<keyword id="KW-0968">Cytoplasmic vesicle</keyword>
<keyword id="KW-0931">ER-Golgi transport</keyword>
<keyword id="KW-0333">Golgi apparatus</keyword>
<keyword id="KW-0472">Membrane</keyword>
<keyword id="KW-0653">Protein transport</keyword>
<keyword id="KW-1185">Reference proteome</keyword>
<keyword id="KW-0677">Repeat</keyword>
<keyword id="KW-0813">Transport</keyword>
<keyword id="KW-0853">WD repeat</keyword>
<name>COPB2_CAEEL</name>
<organism>
    <name type="scientific">Caenorhabditis elegans</name>
    <dbReference type="NCBI Taxonomy" id="6239"/>
    <lineage>
        <taxon>Eukaryota</taxon>
        <taxon>Metazoa</taxon>
        <taxon>Ecdysozoa</taxon>
        <taxon>Nematoda</taxon>
        <taxon>Chromadorea</taxon>
        <taxon>Rhabditida</taxon>
        <taxon>Rhabditina</taxon>
        <taxon>Rhabditomorpha</taxon>
        <taxon>Rhabditoidea</taxon>
        <taxon>Rhabditidae</taxon>
        <taxon>Peloderinae</taxon>
        <taxon>Caenorhabditis</taxon>
    </lineage>
</organism>
<reference key="1">
    <citation type="journal article" date="1998" name="Science">
        <title>Genome sequence of the nematode C. elegans: a platform for investigating biology.</title>
        <authorList>
            <consortium name="The C. elegans sequencing consortium"/>
        </authorList>
    </citation>
    <scope>NUCLEOTIDE SEQUENCE [LARGE SCALE GENOMIC DNA]</scope>
    <source>
        <strain>Bristol N2</strain>
    </source>
</reference>
<reference key="2">
    <citation type="unpublished observations" date="1998-06">
        <authorList>
            <person name="Gaitatzes C."/>
        </authorList>
    </citation>
    <scope>CONCEPTUAL TRANSLATION</scope>
</reference>
<reference key="3">
    <citation type="journal article" date="1999" name="Mol. Biol. Cell">
        <title>Receptor-mediated endocytosis in the Caenorhabditis elegans oocyte.</title>
        <authorList>
            <person name="Grant B."/>
            <person name="Hirsh D."/>
        </authorList>
    </citation>
    <scope>DISRUPTION PHENOTYPE</scope>
</reference>